<protein>
    <recommendedName>
        <fullName>Putative transglycosylase H16_A0665</fullName>
        <ecNumber>2.4.2.-</ecNumber>
    </recommendedName>
</protein>
<proteinExistence type="inferred from homology"/>
<organism>
    <name type="scientific">Cupriavidus necator (strain ATCC 17699 / DSM 428 / KCTC 22496 / NCIMB 10442 / H16 / Stanier 337)</name>
    <name type="common">Ralstonia eutropha</name>
    <dbReference type="NCBI Taxonomy" id="381666"/>
    <lineage>
        <taxon>Bacteria</taxon>
        <taxon>Pseudomonadati</taxon>
        <taxon>Pseudomonadota</taxon>
        <taxon>Betaproteobacteria</taxon>
        <taxon>Burkholderiales</taxon>
        <taxon>Burkholderiaceae</taxon>
        <taxon>Cupriavidus</taxon>
    </lineage>
</organism>
<name>TRG_CUPNH</name>
<evidence type="ECO:0000255" key="1"/>
<evidence type="ECO:0000305" key="2"/>
<sequence>MKRLWSAFIKLLVLAVIGGALLAAIAILAANRQLPSLDALTAFRHTPDYVPIGKIPRELTGAVVAIEDERFYVHDGIDYIGVVRAGVANLSDELSQGASTITMQVARNFYLSRDKTYTRKLYEVLLSYRIEKALTKDEILELYMNKIYLGQGAYGFADAARTYFGKRLDQLTLAECAMLAGLPKAPSANNPVANPRRARQRQVYILQRMLELGRISRGEYDGALLEPLRLR</sequence>
<reference key="1">
    <citation type="journal article" date="2006" name="Nat. Biotechnol.">
        <title>Genome sequence of the bioplastic-producing 'Knallgas' bacterium Ralstonia eutropha H16.</title>
        <authorList>
            <person name="Pohlmann A."/>
            <person name="Fricke W.F."/>
            <person name="Reinecke F."/>
            <person name="Kusian B."/>
            <person name="Liesegang H."/>
            <person name="Cramm R."/>
            <person name="Eitinger T."/>
            <person name="Ewering C."/>
            <person name="Poetter M."/>
            <person name="Schwartz E."/>
            <person name="Strittmatter A."/>
            <person name="Voss I."/>
            <person name="Gottschalk G."/>
            <person name="Steinbuechel A."/>
            <person name="Friedrich B."/>
            <person name="Bowien B."/>
        </authorList>
    </citation>
    <scope>NUCLEOTIDE SEQUENCE [LARGE SCALE GENOMIC DNA]</scope>
    <source>
        <strain>ATCC 17699 / DSM 428 / KCTC 22496 / NCIMB 10442 / H16 / Stanier 337</strain>
    </source>
</reference>
<reference key="2">
    <citation type="journal article" date="1993" name="FEMS Microbiol. Lett.">
        <title>The Alcaligenes eutrophus ldh structural gene encodes a novel type of lactate dehydrogenase.</title>
        <authorList>
            <person name="Jendrossek D."/>
            <person name="Kratzin H.D."/>
            <person name="Steinbuechel A."/>
        </authorList>
    </citation>
    <scope>NUCLEOTIDE SEQUENCE [GENOMIC DNA] OF 1-207</scope>
</reference>
<gene>
    <name type="ordered locus">H16_A0665</name>
</gene>
<keyword id="KW-0133">Cell shape</keyword>
<keyword id="KW-0961">Cell wall biogenesis/degradation</keyword>
<keyword id="KW-0472">Membrane</keyword>
<keyword id="KW-0573">Peptidoglycan synthesis</keyword>
<keyword id="KW-1185">Reference proteome</keyword>
<keyword id="KW-0964">Secreted</keyword>
<keyword id="KW-0808">Transferase</keyword>
<keyword id="KW-0812">Transmembrane</keyword>
<keyword id="KW-1133">Transmembrane helix</keyword>
<feature type="chain" id="PRO_0000083163" description="Putative transglycosylase H16_A0665">
    <location>
        <begin position="1"/>
        <end position="231"/>
    </location>
</feature>
<feature type="transmembrane region" description="Helical" evidence="1">
    <location>
        <begin position="8"/>
        <end position="28"/>
    </location>
</feature>
<feature type="sequence conflict" description="In Ref. 2; CAA80433." evidence="2" ref="2">
    <original>P</original>
    <variation>G</variation>
    <location>
        <position position="183"/>
    </location>
</feature>
<dbReference type="EC" id="2.4.2.-"/>
<dbReference type="EMBL" id="AM260479">
    <property type="protein sequence ID" value="CAJ91813.1"/>
    <property type="molecule type" value="Genomic_DNA"/>
</dbReference>
<dbReference type="EMBL" id="Z22737">
    <property type="protein sequence ID" value="CAA80433.1"/>
    <property type="molecule type" value="Genomic_DNA"/>
</dbReference>
<dbReference type="PIR" id="I39536">
    <property type="entry name" value="I39536"/>
</dbReference>
<dbReference type="RefSeq" id="WP_010811523.1">
    <property type="nucleotide sequence ID" value="NZ_CP039287.1"/>
</dbReference>
<dbReference type="SMR" id="Q07259"/>
<dbReference type="STRING" id="381666.H16_A0665"/>
<dbReference type="CAZy" id="GT51">
    <property type="family name" value="Glycosyltransferase Family 51"/>
</dbReference>
<dbReference type="KEGG" id="reh:H16_A0665"/>
<dbReference type="eggNOG" id="COG5009">
    <property type="taxonomic scope" value="Bacteria"/>
</dbReference>
<dbReference type="HOGENOM" id="CLU_006354_1_2_4"/>
<dbReference type="OrthoDB" id="9766909at2"/>
<dbReference type="UniPathway" id="UPA00219"/>
<dbReference type="Proteomes" id="UP000008210">
    <property type="component" value="Chromosome 1"/>
</dbReference>
<dbReference type="GO" id="GO:0005576">
    <property type="term" value="C:extracellular region"/>
    <property type="evidence" value="ECO:0007669"/>
    <property type="project" value="UniProtKB-SubCell"/>
</dbReference>
<dbReference type="GO" id="GO:0016020">
    <property type="term" value="C:membrane"/>
    <property type="evidence" value="ECO:0007669"/>
    <property type="project" value="UniProtKB-SubCell"/>
</dbReference>
<dbReference type="GO" id="GO:0030288">
    <property type="term" value="C:outer membrane-bounded periplasmic space"/>
    <property type="evidence" value="ECO:0007669"/>
    <property type="project" value="TreeGrafter"/>
</dbReference>
<dbReference type="GO" id="GO:0008955">
    <property type="term" value="F:peptidoglycan glycosyltransferase activity"/>
    <property type="evidence" value="ECO:0007669"/>
    <property type="project" value="TreeGrafter"/>
</dbReference>
<dbReference type="GO" id="GO:0071555">
    <property type="term" value="P:cell wall organization"/>
    <property type="evidence" value="ECO:0007669"/>
    <property type="project" value="UniProtKB-KW"/>
</dbReference>
<dbReference type="GO" id="GO:0009252">
    <property type="term" value="P:peptidoglycan biosynthetic process"/>
    <property type="evidence" value="ECO:0007669"/>
    <property type="project" value="UniProtKB-UniPathway"/>
</dbReference>
<dbReference type="GO" id="GO:0008360">
    <property type="term" value="P:regulation of cell shape"/>
    <property type="evidence" value="ECO:0007669"/>
    <property type="project" value="UniProtKB-KW"/>
</dbReference>
<dbReference type="FunFam" id="1.10.3810.10:FF:000003">
    <property type="entry name" value="Penicillin-binding protein 1a"/>
    <property type="match status" value="1"/>
</dbReference>
<dbReference type="Gene3D" id="1.10.3810.10">
    <property type="entry name" value="Biosynthetic peptidoglycan transglycosylase-like"/>
    <property type="match status" value="1"/>
</dbReference>
<dbReference type="InterPro" id="IPR001264">
    <property type="entry name" value="Glyco_trans_51"/>
</dbReference>
<dbReference type="InterPro" id="IPR050396">
    <property type="entry name" value="Glycosyltr_51/Transpeptidase"/>
</dbReference>
<dbReference type="InterPro" id="IPR023346">
    <property type="entry name" value="Lysozyme-like_dom_sf"/>
</dbReference>
<dbReference type="InterPro" id="IPR036950">
    <property type="entry name" value="PBP_transglycosylase"/>
</dbReference>
<dbReference type="PANTHER" id="PTHR32282">
    <property type="entry name" value="BINDING PROTEIN TRANSPEPTIDASE, PUTATIVE-RELATED"/>
    <property type="match status" value="1"/>
</dbReference>
<dbReference type="PANTHER" id="PTHR32282:SF27">
    <property type="entry name" value="PENICILLIN-BINDING PROTEIN 1A"/>
    <property type="match status" value="1"/>
</dbReference>
<dbReference type="Pfam" id="PF00912">
    <property type="entry name" value="Transgly"/>
    <property type="match status" value="1"/>
</dbReference>
<dbReference type="SUPFAM" id="SSF53955">
    <property type="entry name" value="Lysozyme-like"/>
    <property type="match status" value="1"/>
</dbReference>
<comment type="function">
    <text>Cell wall formation.</text>
</comment>
<comment type="pathway">
    <text>Cell wall biogenesis; peptidoglycan biosynthesis.</text>
</comment>
<comment type="subcellular location">
    <subcellularLocation>
        <location>Secreted</location>
    </subcellularLocation>
    <subcellularLocation>
        <location evidence="2">Membrane</location>
    </subcellularLocation>
    <text evidence="2">Membrane-associated.</text>
</comment>
<comment type="similarity">
    <text evidence="2">Belongs to the glycosyltransferase 51 family.</text>
</comment>
<accession>Q07259</accession>
<accession>Q0KDV8</accession>